<organism>
    <name type="scientific">Drosophila willistoni</name>
    <name type="common">Fruit fly</name>
    <dbReference type="NCBI Taxonomy" id="7260"/>
    <lineage>
        <taxon>Eukaryota</taxon>
        <taxon>Metazoa</taxon>
        <taxon>Ecdysozoa</taxon>
        <taxon>Arthropoda</taxon>
        <taxon>Hexapoda</taxon>
        <taxon>Insecta</taxon>
        <taxon>Pterygota</taxon>
        <taxon>Neoptera</taxon>
        <taxon>Endopterygota</taxon>
        <taxon>Diptera</taxon>
        <taxon>Brachycera</taxon>
        <taxon>Muscomorpha</taxon>
        <taxon>Ephydroidea</taxon>
        <taxon>Drosophilidae</taxon>
        <taxon>Drosophila</taxon>
        <taxon>Sophophora</taxon>
    </lineage>
</organism>
<name>AMYR_DROWI</name>
<accession>O76263</accession>
<dbReference type="EC" id="3.2.1.1" evidence="2"/>
<dbReference type="EMBL" id="AF039560">
    <property type="protein sequence ID" value="AAC39095.1"/>
    <property type="molecule type" value="Genomic_DNA"/>
</dbReference>
<dbReference type="SMR" id="O76263"/>
<dbReference type="CAZy" id="GH13">
    <property type="family name" value="Glycoside Hydrolase Family 13"/>
</dbReference>
<dbReference type="eggNOG" id="KOG2212">
    <property type="taxonomic scope" value="Eukaryota"/>
</dbReference>
<dbReference type="GO" id="GO:0005576">
    <property type="term" value="C:extracellular region"/>
    <property type="evidence" value="ECO:0007669"/>
    <property type="project" value="UniProtKB-SubCell"/>
</dbReference>
<dbReference type="GO" id="GO:0004134">
    <property type="term" value="F:4-alpha-glucanotransferase activity"/>
    <property type="evidence" value="ECO:0007669"/>
    <property type="project" value="EnsemblMetazoa"/>
</dbReference>
<dbReference type="GO" id="GO:0004556">
    <property type="term" value="F:alpha-amylase activity"/>
    <property type="evidence" value="ECO:0007669"/>
    <property type="project" value="UniProtKB-EC"/>
</dbReference>
<dbReference type="GO" id="GO:0046872">
    <property type="term" value="F:metal ion binding"/>
    <property type="evidence" value="ECO:0007669"/>
    <property type="project" value="UniProtKB-KW"/>
</dbReference>
<dbReference type="GO" id="GO:0005975">
    <property type="term" value="P:carbohydrate metabolic process"/>
    <property type="evidence" value="ECO:0007669"/>
    <property type="project" value="InterPro"/>
</dbReference>
<dbReference type="CDD" id="cd11317">
    <property type="entry name" value="AmyAc_bac_euk_AmyA"/>
    <property type="match status" value="1"/>
</dbReference>
<dbReference type="FunFam" id="3.20.20.80:FF:000119">
    <property type="entry name" value="Alpha-amylase-related protein"/>
    <property type="match status" value="1"/>
</dbReference>
<dbReference type="FunFam" id="2.60.40.1180:FF:000020">
    <property type="entry name" value="Pancreatic alpha-amylase"/>
    <property type="match status" value="1"/>
</dbReference>
<dbReference type="Gene3D" id="3.20.20.80">
    <property type="entry name" value="Glycosidases"/>
    <property type="match status" value="1"/>
</dbReference>
<dbReference type="Gene3D" id="2.60.40.1180">
    <property type="entry name" value="Golgi alpha-mannosidase II"/>
    <property type="match status" value="1"/>
</dbReference>
<dbReference type="InterPro" id="IPR006048">
    <property type="entry name" value="A-amylase/branching_C"/>
</dbReference>
<dbReference type="InterPro" id="IPR031319">
    <property type="entry name" value="A-amylase_C"/>
</dbReference>
<dbReference type="InterPro" id="IPR006046">
    <property type="entry name" value="Alpha_amylase"/>
</dbReference>
<dbReference type="InterPro" id="IPR006047">
    <property type="entry name" value="Glyco_hydro_13_cat_dom"/>
</dbReference>
<dbReference type="InterPro" id="IPR013780">
    <property type="entry name" value="Glyco_hydro_b"/>
</dbReference>
<dbReference type="InterPro" id="IPR017853">
    <property type="entry name" value="Glycoside_hydrolase_SF"/>
</dbReference>
<dbReference type="PANTHER" id="PTHR43447">
    <property type="entry name" value="ALPHA-AMYLASE"/>
    <property type="match status" value="1"/>
</dbReference>
<dbReference type="Pfam" id="PF00128">
    <property type="entry name" value="Alpha-amylase"/>
    <property type="match status" value="1"/>
</dbReference>
<dbReference type="Pfam" id="PF02806">
    <property type="entry name" value="Alpha-amylase_C"/>
    <property type="match status" value="1"/>
</dbReference>
<dbReference type="PRINTS" id="PR00110">
    <property type="entry name" value="ALPHAAMYLASE"/>
</dbReference>
<dbReference type="SMART" id="SM00642">
    <property type="entry name" value="Aamy"/>
    <property type="match status" value="1"/>
</dbReference>
<dbReference type="SMART" id="SM00632">
    <property type="entry name" value="Aamy_C"/>
    <property type="match status" value="1"/>
</dbReference>
<dbReference type="SUPFAM" id="SSF51445">
    <property type="entry name" value="(Trans)glycosidases"/>
    <property type="match status" value="1"/>
</dbReference>
<dbReference type="SUPFAM" id="SSF51011">
    <property type="entry name" value="Glycosyl hydrolase domain"/>
    <property type="match status" value="1"/>
</dbReference>
<reference key="1">
    <citation type="submission" date="1997-12" db="EMBL/GenBank/DDBJ databases">
        <authorList>
            <person name="Da Lage J.-L."/>
        </authorList>
    </citation>
    <scope>NUCLEOTIDE SEQUENCE [GENOMIC DNA]</scope>
</reference>
<gene>
    <name type="primary">Amyrel</name>
</gene>
<protein>
    <recommendedName>
        <fullName>Alpha-amylase-related protein</fullName>
        <ecNumber evidence="2">3.2.1.1</ecNumber>
    </recommendedName>
</protein>
<proteinExistence type="inferred from homology"/>
<sequence length="492" mass="55641">MRLSLSVLLCLGLALTLAQHNPHWWGNRNTIVHLFEWKWTDIADKCERFLGPRGYAGVQVSPANENIISEGRPWWERYQPISYKLVTRSGNELEFASMVKRCNDVGVRIYVDVLLNHMSADFEGLATGTGGSVAEPAKKSFPSVPYTADDFHETCEITDWNDRFQVQQCELVGLKDLNQNRDWVRTKLIEFLDHLIELGVAGFRVDAAKHMASEDLSFIYSSVRDLNINHGFPNNARPFIYQEVIDHGHETVTREEYNELGAVTEFRFSEEIGKAFRGNNALKWLQSWGTDWGFLSSGQALTFVDNHDNQRDSGDVLNYKSPKQYKMATAFHLAYPYGISRVMSSFGFDDRDQAPPQDAQEQLISPEFDADGGCTNGWICEHRWRQIYNMVEFKNTVRDTELTNWWDNGDNQIAFCRGSKGFIAINNNLYNLSETLQTCLPAGEYCDVISGSLVDGACTGKSVSVDGNGYGYIHIGTEDFDGVLAIHTDAKL</sequence>
<comment type="catalytic activity">
    <reaction evidence="2">
        <text>Endohydrolysis of (1-&gt;4)-alpha-D-glucosidic linkages in polysaccharides containing three or more (1-&gt;4)-alpha-linked D-glucose units.</text>
        <dbReference type="EC" id="3.2.1.1"/>
    </reaction>
</comment>
<comment type="cofactor">
    <cofactor evidence="3">
        <name>Ca(2+)</name>
        <dbReference type="ChEBI" id="CHEBI:29108"/>
    </cofactor>
    <text evidence="3">Binds 1 Ca(2+) ion per subunit.</text>
</comment>
<comment type="cofactor">
    <cofactor evidence="3">
        <name>chloride</name>
        <dbReference type="ChEBI" id="CHEBI:17996"/>
    </cofactor>
    <text evidence="3">Binds 1 Cl(-) ion per subunit.</text>
</comment>
<comment type="subunit">
    <text evidence="1">Monomer.</text>
</comment>
<comment type="subcellular location">
    <subcellularLocation>
        <location evidence="5">Secreted</location>
    </subcellularLocation>
</comment>
<comment type="similarity">
    <text evidence="5">Belongs to the glycosyl hydrolase 13 family.</text>
</comment>
<evidence type="ECO:0000250" key="1"/>
<evidence type="ECO:0000250" key="2">
    <source>
        <dbReference type="UniProtKB" id="P04746"/>
    </source>
</evidence>
<evidence type="ECO:0000250" key="3">
    <source>
        <dbReference type="UniProtKB" id="P56634"/>
    </source>
</evidence>
<evidence type="ECO:0000255" key="4"/>
<evidence type="ECO:0000305" key="5"/>
<feature type="signal peptide" evidence="1">
    <location>
        <begin position="1"/>
        <end position="18"/>
    </location>
</feature>
<feature type="chain" id="PRO_0000001393" description="Alpha-amylase-related protein">
    <location>
        <begin position="19"/>
        <end position="492"/>
    </location>
</feature>
<feature type="active site" description="Nucleophile" evidence="2">
    <location>
        <position position="206"/>
    </location>
</feature>
<feature type="active site" description="Proton donor" evidence="2">
    <location>
        <position position="243"/>
    </location>
</feature>
<feature type="binding site" evidence="3">
    <location>
        <position position="116"/>
    </location>
    <ligand>
        <name>Ca(2+)</name>
        <dbReference type="ChEBI" id="CHEBI:29108"/>
    </ligand>
</feature>
<feature type="binding site" evidence="3">
    <location>
        <position position="167"/>
    </location>
    <ligand>
        <name>Ca(2+)</name>
        <dbReference type="ChEBI" id="CHEBI:29108"/>
    </ligand>
</feature>
<feature type="binding site" evidence="3">
    <location>
        <position position="176"/>
    </location>
    <ligand>
        <name>Ca(2+)</name>
        <dbReference type="ChEBI" id="CHEBI:29108"/>
    </ligand>
</feature>
<feature type="binding site" evidence="3">
    <location>
        <position position="204"/>
    </location>
    <ligand>
        <name>chloride</name>
        <dbReference type="ChEBI" id="CHEBI:17996"/>
    </ligand>
</feature>
<feature type="binding site" evidence="3">
    <location>
        <position position="210"/>
    </location>
    <ligand>
        <name>Ca(2+)</name>
        <dbReference type="ChEBI" id="CHEBI:29108"/>
    </ligand>
</feature>
<feature type="binding site" evidence="3">
    <location>
        <position position="306"/>
    </location>
    <ligand>
        <name>chloride</name>
        <dbReference type="ChEBI" id="CHEBI:17996"/>
    </ligand>
</feature>
<feature type="binding site" evidence="3">
    <location>
        <position position="341"/>
    </location>
    <ligand>
        <name>chloride</name>
        <dbReference type="ChEBI" id="CHEBI:17996"/>
    </ligand>
</feature>
<feature type="site" description="Transition state stabilizer" evidence="2">
    <location>
        <position position="308"/>
    </location>
</feature>
<feature type="modified residue" description="Pyrrolidone carboxylic acid" evidence="1">
    <location>
        <position position="19"/>
    </location>
</feature>
<feature type="disulfide bond" evidence="3">
    <location>
        <begin position="46"/>
        <end position="102"/>
    </location>
</feature>
<feature type="disulfide bond" evidence="3">
    <location>
        <begin position="155"/>
        <end position="169"/>
    </location>
</feature>
<feature type="disulfide bond" evidence="3">
    <location>
        <begin position="374"/>
        <end position="380"/>
    </location>
</feature>
<feature type="disulfide bond" evidence="4">
    <location>
        <begin position="416"/>
        <end position="439"/>
    </location>
</feature>
<feature type="disulfide bond" evidence="3">
    <location>
        <begin position="446"/>
        <end position="458"/>
    </location>
</feature>
<keyword id="KW-0106">Calcium</keyword>
<keyword id="KW-0119">Carbohydrate metabolism</keyword>
<keyword id="KW-0868">Chloride</keyword>
<keyword id="KW-1015">Disulfide bond</keyword>
<keyword id="KW-0326">Glycosidase</keyword>
<keyword id="KW-0378">Hydrolase</keyword>
<keyword id="KW-0479">Metal-binding</keyword>
<keyword id="KW-0873">Pyrrolidone carboxylic acid</keyword>
<keyword id="KW-0964">Secreted</keyword>
<keyword id="KW-0732">Signal</keyword>